<proteinExistence type="inferred from homology"/>
<accession>B2K3K5</accession>
<evidence type="ECO:0000255" key="1">
    <source>
        <dbReference type="HAMAP-Rule" id="MF_01040"/>
    </source>
</evidence>
<gene>
    <name evidence="1" type="primary">gpmB</name>
    <name type="ordered locus">YPTS_0620</name>
</gene>
<feature type="chain" id="PRO_1000136020" description="Probable phosphoglycerate mutase GpmB">
    <location>
        <begin position="1"/>
        <end position="215"/>
    </location>
</feature>
<feature type="active site" description="Tele-phosphohistidine intermediate" evidence="1">
    <location>
        <position position="9"/>
    </location>
</feature>
<feature type="active site" description="Proton donor/acceptor" evidence="1">
    <location>
        <position position="82"/>
    </location>
</feature>
<feature type="binding site" evidence="1">
    <location>
        <begin position="8"/>
        <end position="15"/>
    </location>
    <ligand>
        <name>substrate</name>
    </ligand>
</feature>
<feature type="binding site" evidence="1">
    <location>
        <begin position="21"/>
        <end position="22"/>
    </location>
    <ligand>
        <name>substrate</name>
    </ligand>
</feature>
<feature type="binding site" evidence="1">
    <location>
        <position position="58"/>
    </location>
    <ligand>
        <name>substrate</name>
    </ligand>
</feature>
<feature type="binding site" evidence="1">
    <location>
        <begin position="82"/>
        <end position="85"/>
    </location>
    <ligand>
        <name>substrate</name>
    </ligand>
</feature>
<feature type="binding site" evidence="1">
    <location>
        <begin position="151"/>
        <end position="152"/>
    </location>
    <ligand>
        <name>substrate</name>
    </ligand>
</feature>
<feature type="site" description="Transition state stabilizer" evidence="1">
    <location>
        <position position="150"/>
    </location>
</feature>
<dbReference type="EC" id="5.4.2.-" evidence="1"/>
<dbReference type="EMBL" id="CP001048">
    <property type="protein sequence ID" value="ACC87604.1"/>
    <property type="molecule type" value="Genomic_DNA"/>
</dbReference>
<dbReference type="RefSeq" id="WP_002209230.1">
    <property type="nucleotide sequence ID" value="NZ_CP009780.1"/>
</dbReference>
<dbReference type="SMR" id="B2K3K5"/>
<dbReference type="GeneID" id="57974154"/>
<dbReference type="KEGG" id="ypb:YPTS_0620"/>
<dbReference type="PATRIC" id="fig|502801.10.peg.4298"/>
<dbReference type="UniPathway" id="UPA00109">
    <property type="reaction ID" value="UER00186"/>
</dbReference>
<dbReference type="GO" id="GO:0005737">
    <property type="term" value="C:cytoplasm"/>
    <property type="evidence" value="ECO:0007669"/>
    <property type="project" value="TreeGrafter"/>
</dbReference>
<dbReference type="GO" id="GO:0016791">
    <property type="term" value="F:phosphatase activity"/>
    <property type="evidence" value="ECO:0007669"/>
    <property type="project" value="TreeGrafter"/>
</dbReference>
<dbReference type="GO" id="GO:0004619">
    <property type="term" value="F:phosphoglycerate mutase activity"/>
    <property type="evidence" value="ECO:0007669"/>
    <property type="project" value="UniProtKB-UniRule"/>
</dbReference>
<dbReference type="GO" id="GO:0006096">
    <property type="term" value="P:glycolytic process"/>
    <property type="evidence" value="ECO:0007669"/>
    <property type="project" value="UniProtKB-UniRule"/>
</dbReference>
<dbReference type="CDD" id="cd07067">
    <property type="entry name" value="HP_PGM_like"/>
    <property type="match status" value="1"/>
</dbReference>
<dbReference type="Gene3D" id="3.40.50.1240">
    <property type="entry name" value="Phosphoglycerate mutase-like"/>
    <property type="match status" value="1"/>
</dbReference>
<dbReference type="HAMAP" id="MF_01040">
    <property type="entry name" value="PGAM_GpmB"/>
    <property type="match status" value="1"/>
</dbReference>
<dbReference type="InterPro" id="IPR013078">
    <property type="entry name" value="His_Pase_superF_clade-1"/>
</dbReference>
<dbReference type="InterPro" id="IPR029033">
    <property type="entry name" value="His_PPase_superfam"/>
</dbReference>
<dbReference type="InterPro" id="IPR001345">
    <property type="entry name" value="PG/BPGM_mutase_AS"/>
</dbReference>
<dbReference type="InterPro" id="IPR050275">
    <property type="entry name" value="PGM_Phosphatase"/>
</dbReference>
<dbReference type="InterPro" id="IPR023086">
    <property type="entry name" value="Phosphoglycerate_mutase_GpmB"/>
</dbReference>
<dbReference type="NCBIfam" id="NF002901">
    <property type="entry name" value="PRK03482.1"/>
    <property type="match status" value="1"/>
</dbReference>
<dbReference type="PANTHER" id="PTHR48100">
    <property type="entry name" value="BROAD-SPECIFICITY PHOSPHATASE YOR283W-RELATED"/>
    <property type="match status" value="1"/>
</dbReference>
<dbReference type="PANTHER" id="PTHR48100:SF1">
    <property type="entry name" value="HISTIDINE PHOSPHATASE FAMILY PROTEIN-RELATED"/>
    <property type="match status" value="1"/>
</dbReference>
<dbReference type="Pfam" id="PF00300">
    <property type="entry name" value="His_Phos_1"/>
    <property type="match status" value="1"/>
</dbReference>
<dbReference type="SMART" id="SM00855">
    <property type="entry name" value="PGAM"/>
    <property type="match status" value="1"/>
</dbReference>
<dbReference type="SUPFAM" id="SSF53254">
    <property type="entry name" value="Phosphoglycerate mutase-like"/>
    <property type="match status" value="1"/>
</dbReference>
<dbReference type="PROSITE" id="PS00175">
    <property type="entry name" value="PG_MUTASE"/>
    <property type="match status" value="1"/>
</dbReference>
<comment type="catalytic activity">
    <reaction evidence="1">
        <text>(2R)-2-phosphoglycerate = (2R)-3-phosphoglycerate</text>
        <dbReference type="Rhea" id="RHEA:15901"/>
        <dbReference type="ChEBI" id="CHEBI:58272"/>
        <dbReference type="ChEBI" id="CHEBI:58289"/>
    </reaction>
</comment>
<comment type="pathway">
    <text evidence="1">Carbohydrate degradation; glycolysis; pyruvate from D-glyceraldehyde 3-phosphate: step 3/5.</text>
</comment>
<comment type="similarity">
    <text evidence="1">Belongs to the phosphoglycerate mutase family. GpmB subfamily.</text>
</comment>
<sequence>MLQVYLVRHGETLWNAARRIQGQSDSPLTEIGIRQAHLVAQRVRNQGITHIISSDLGRTQQTAKIIADACGLTMVTDPRLRELNMGVLENRPIDSLTPEEEQWRKQMVNGTEGARIPEGESMTELGRRMHAALDSCLELPAGSKPLLVSHGMALGCLLSTLLGLPAHAERRLRLRNCSLSRVDYQESPWLASGWVIESAGDTAHLDMPALDELQR</sequence>
<reference key="1">
    <citation type="submission" date="2008-04" db="EMBL/GenBank/DDBJ databases">
        <title>Complete sequence of Yersinia pseudotuberculosis PB1/+.</title>
        <authorList>
            <person name="Copeland A."/>
            <person name="Lucas S."/>
            <person name="Lapidus A."/>
            <person name="Glavina del Rio T."/>
            <person name="Dalin E."/>
            <person name="Tice H."/>
            <person name="Bruce D."/>
            <person name="Goodwin L."/>
            <person name="Pitluck S."/>
            <person name="Munk A.C."/>
            <person name="Brettin T."/>
            <person name="Detter J.C."/>
            <person name="Han C."/>
            <person name="Tapia R."/>
            <person name="Schmutz J."/>
            <person name="Larimer F."/>
            <person name="Land M."/>
            <person name="Hauser L."/>
            <person name="Challacombe J.F."/>
            <person name="Green L."/>
            <person name="Lindler L.E."/>
            <person name="Nikolich M.P."/>
            <person name="Richardson P."/>
        </authorList>
    </citation>
    <scope>NUCLEOTIDE SEQUENCE [LARGE SCALE GENOMIC DNA]</scope>
    <source>
        <strain>PB1/+</strain>
    </source>
</reference>
<organism>
    <name type="scientific">Yersinia pseudotuberculosis serotype IB (strain PB1/+)</name>
    <dbReference type="NCBI Taxonomy" id="502801"/>
    <lineage>
        <taxon>Bacteria</taxon>
        <taxon>Pseudomonadati</taxon>
        <taxon>Pseudomonadota</taxon>
        <taxon>Gammaproteobacteria</taxon>
        <taxon>Enterobacterales</taxon>
        <taxon>Yersiniaceae</taxon>
        <taxon>Yersinia</taxon>
    </lineage>
</organism>
<keyword id="KW-0324">Glycolysis</keyword>
<keyword id="KW-0413">Isomerase</keyword>
<protein>
    <recommendedName>
        <fullName evidence="1">Probable phosphoglycerate mutase GpmB</fullName>
        <ecNumber evidence="1">5.4.2.-</ecNumber>
    </recommendedName>
    <alternativeName>
        <fullName evidence="1">PGAM</fullName>
    </alternativeName>
    <alternativeName>
        <fullName evidence="1">Phosphoglyceromutase</fullName>
    </alternativeName>
</protein>
<name>GPMB_YERPB</name>